<comment type="subunit">
    <text evidence="1">Forms oligomers.</text>
</comment>
<comment type="subcellular location">
    <subcellularLocation>
        <location evidence="1">Cytoplasm</location>
        <location evidence="1">Nucleoid</location>
    </subcellularLocation>
</comment>
<comment type="similarity">
    <text evidence="1">Belongs to the MraZ family.</text>
</comment>
<evidence type="ECO:0000255" key="1">
    <source>
        <dbReference type="HAMAP-Rule" id="MF_01008"/>
    </source>
</evidence>
<evidence type="ECO:0000255" key="2">
    <source>
        <dbReference type="PROSITE-ProRule" id="PRU01076"/>
    </source>
</evidence>
<gene>
    <name evidence="1" type="primary">mraZ</name>
    <name type="ordered locus">DMR_33360</name>
</gene>
<organism>
    <name type="scientific">Solidesulfovibrio magneticus (strain ATCC 700980 / DSM 13731 / RS-1)</name>
    <name type="common">Desulfovibrio magneticus</name>
    <dbReference type="NCBI Taxonomy" id="573370"/>
    <lineage>
        <taxon>Bacteria</taxon>
        <taxon>Pseudomonadati</taxon>
        <taxon>Thermodesulfobacteriota</taxon>
        <taxon>Desulfovibrionia</taxon>
        <taxon>Desulfovibrionales</taxon>
        <taxon>Desulfovibrionaceae</taxon>
        <taxon>Solidesulfovibrio</taxon>
    </lineage>
</organism>
<feature type="chain" id="PRO_1000213173" description="Transcriptional regulator MraZ">
    <location>
        <begin position="1"/>
        <end position="152"/>
    </location>
</feature>
<feature type="domain" description="SpoVT-AbrB 1" evidence="2">
    <location>
        <begin position="5"/>
        <end position="52"/>
    </location>
</feature>
<feature type="domain" description="SpoVT-AbrB 2" evidence="2">
    <location>
        <begin position="81"/>
        <end position="124"/>
    </location>
</feature>
<keyword id="KW-0963">Cytoplasm</keyword>
<keyword id="KW-0238">DNA-binding</keyword>
<keyword id="KW-0677">Repeat</keyword>
<keyword id="KW-0804">Transcription</keyword>
<keyword id="KW-0805">Transcription regulation</keyword>
<protein>
    <recommendedName>
        <fullName>Transcriptional regulator MraZ</fullName>
    </recommendedName>
</protein>
<reference key="1">
    <citation type="journal article" date="2009" name="Genome Res.">
        <title>Whole genome sequence of Desulfovibrio magneticus strain RS-1 revealed common gene clusters in magnetotactic bacteria.</title>
        <authorList>
            <person name="Nakazawa H."/>
            <person name="Arakaki A."/>
            <person name="Narita-Yamada S."/>
            <person name="Yashiro I."/>
            <person name="Jinno K."/>
            <person name="Aoki N."/>
            <person name="Tsuruyama A."/>
            <person name="Okamura Y."/>
            <person name="Tanikawa S."/>
            <person name="Fujita N."/>
            <person name="Takeyama H."/>
            <person name="Matsunaga T."/>
        </authorList>
    </citation>
    <scope>NUCLEOTIDE SEQUENCE [LARGE SCALE GENOMIC DNA]</scope>
    <source>
        <strain>ATCC 700980 / DSM 13731 / RS-1</strain>
    </source>
</reference>
<accession>C4XK87</accession>
<sequence>MFRGHSNRSLDPKGRLMLPPEFREEIFRLVPDGRVMLTNNFDGAISGYPMPEWEAVEASFRAGNTLMPGFRDIERFFIAGATEVTVDKQGRILIPPYLRTYAGLDKEMVLAGVGTKFEIWDQGRFEERLRQTAANFNAHMEAMAASGVSLRF</sequence>
<dbReference type="EMBL" id="AP010904">
    <property type="protein sequence ID" value="BAH76827.1"/>
    <property type="molecule type" value="Genomic_DNA"/>
</dbReference>
<dbReference type="RefSeq" id="WP_015861977.1">
    <property type="nucleotide sequence ID" value="NC_012796.1"/>
</dbReference>
<dbReference type="SMR" id="C4XK87"/>
<dbReference type="STRING" id="573370.DMR_33360"/>
<dbReference type="KEGG" id="dma:DMR_33360"/>
<dbReference type="eggNOG" id="COG2001">
    <property type="taxonomic scope" value="Bacteria"/>
</dbReference>
<dbReference type="HOGENOM" id="CLU_107907_0_5_7"/>
<dbReference type="OrthoDB" id="9807753at2"/>
<dbReference type="Proteomes" id="UP000009071">
    <property type="component" value="Chromosome"/>
</dbReference>
<dbReference type="GO" id="GO:0005737">
    <property type="term" value="C:cytoplasm"/>
    <property type="evidence" value="ECO:0007669"/>
    <property type="project" value="UniProtKB-UniRule"/>
</dbReference>
<dbReference type="GO" id="GO:0009295">
    <property type="term" value="C:nucleoid"/>
    <property type="evidence" value="ECO:0007669"/>
    <property type="project" value="UniProtKB-SubCell"/>
</dbReference>
<dbReference type="GO" id="GO:0003700">
    <property type="term" value="F:DNA-binding transcription factor activity"/>
    <property type="evidence" value="ECO:0007669"/>
    <property type="project" value="UniProtKB-UniRule"/>
</dbReference>
<dbReference type="GO" id="GO:0000976">
    <property type="term" value="F:transcription cis-regulatory region binding"/>
    <property type="evidence" value="ECO:0007669"/>
    <property type="project" value="TreeGrafter"/>
</dbReference>
<dbReference type="GO" id="GO:2000143">
    <property type="term" value="P:negative regulation of DNA-templated transcription initiation"/>
    <property type="evidence" value="ECO:0007669"/>
    <property type="project" value="TreeGrafter"/>
</dbReference>
<dbReference type="CDD" id="cd16321">
    <property type="entry name" value="MraZ_C"/>
    <property type="match status" value="1"/>
</dbReference>
<dbReference type="CDD" id="cd16320">
    <property type="entry name" value="MraZ_N"/>
    <property type="match status" value="1"/>
</dbReference>
<dbReference type="Gene3D" id="3.40.1550.20">
    <property type="entry name" value="Transcriptional regulator MraZ domain"/>
    <property type="match status" value="1"/>
</dbReference>
<dbReference type="HAMAP" id="MF_01008">
    <property type="entry name" value="MraZ"/>
    <property type="match status" value="1"/>
</dbReference>
<dbReference type="InterPro" id="IPR003444">
    <property type="entry name" value="MraZ"/>
</dbReference>
<dbReference type="InterPro" id="IPR035644">
    <property type="entry name" value="MraZ_C"/>
</dbReference>
<dbReference type="InterPro" id="IPR020603">
    <property type="entry name" value="MraZ_dom"/>
</dbReference>
<dbReference type="InterPro" id="IPR035642">
    <property type="entry name" value="MraZ_N"/>
</dbReference>
<dbReference type="InterPro" id="IPR038619">
    <property type="entry name" value="MraZ_sf"/>
</dbReference>
<dbReference type="InterPro" id="IPR007159">
    <property type="entry name" value="SpoVT-AbrB_dom"/>
</dbReference>
<dbReference type="InterPro" id="IPR037914">
    <property type="entry name" value="SpoVT-AbrB_sf"/>
</dbReference>
<dbReference type="NCBIfam" id="TIGR00242">
    <property type="entry name" value="division/cell wall cluster transcriptional repressor MraZ"/>
    <property type="match status" value="1"/>
</dbReference>
<dbReference type="PANTHER" id="PTHR34701">
    <property type="entry name" value="TRANSCRIPTIONAL REGULATOR MRAZ"/>
    <property type="match status" value="1"/>
</dbReference>
<dbReference type="PANTHER" id="PTHR34701:SF1">
    <property type="entry name" value="TRANSCRIPTIONAL REGULATOR MRAZ"/>
    <property type="match status" value="1"/>
</dbReference>
<dbReference type="Pfam" id="PF02381">
    <property type="entry name" value="MraZ"/>
    <property type="match status" value="2"/>
</dbReference>
<dbReference type="SUPFAM" id="SSF89447">
    <property type="entry name" value="AbrB/MazE/MraZ-like"/>
    <property type="match status" value="1"/>
</dbReference>
<dbReference type="PROSITE" id="PS51740">
    <property type="entry name" value="SPOVT_ABRB"/>
    <property type="match status" value="2"/>
</dbReference>
<name>MRAZ_SOLM1</name>
<proteinExistence type="inferred from homology"/>